<reference key="1">
    <citation type="journal article" date="2001" name="Science">
        <title>The genome of the natural genetic engineer Agrobacterium tumefaciens C58.</title>
        <authorList>
            <person name="Wood D.W."/>
            <person name="Setubal J.C."/>
            <person name="Kaul R."/>
            <person name="Monks D.E."/>
            <person name="Kitajima J.P."/>
            <person name="Okura V.K."/>
            <person name="Zhou Y."/>
            <person name="Chen L."/>
            <person name="Wood G.E."/>
            <person name="Almeida N.F. Jr."/>
            <person name="Woo L."/>
            <person name="Chen Y."/>
            <person name="Paulsen I.T."/>
            <person name="Eisen J.A."/>
            <person name="Karp P.D."/>
            <person name="Bovee D. Sr."/>
            <person name="Chapman P."/>
            <person name="Clendenning J."/>
            <person name="Deatherage G."/>
            <person name="Gillet W."/>
            <person name="Grant C."/>
            <person name="Kutyavin T."/>
            <person name="Levy R."/>
            <person name="Li M.-J."/>
            <person name="McClelland E."/>
            <person name="Palmieri A."/>
            <person name="Raymond C."/>
            <person name="Rouse G."/>
            <person name="Saenphimmachak C."/>
            <person name="Wu Z."/>
            <person name="Romero P."/>
            <person name="Gordon D."/>
            <person name="Zhang S."/>
            <person name="Yoo H."/>
            <person name="Tao Y."/>
            <person name="Biddle P."/>
            <person name="Jung M."/>
            <person name="Krespan W."/>
            <person name="Perry M."/>
            <person name="Gordon-Kamm B."/>
            <person name="Liao L."/>
            <person name="Kim S."/>
            <person name="Hendrick C."/>
            <person name="Zhao Z.-Y."/>
            <person name="Dolan M."/>
            <person name="Chumley F."/>
            <person name="Tingey S.V."/>
            <person name="Tomb J.-F."/>
            <person name="Gordon M.P."/>
            <person name="Olson M.V."/>
            <person name="Nester E.W."/>
        </authorList>
    </citation>
    <scope>NUCLEOTIDE SEQUENCE [LARGE SCALE GENOMIC DNA]</scope>
    <source>
        <strain>C58 / ATCC 33970</strain>
    </source>
</reference>
<reference key="2">
    <citation type="journal article" date="2001" name="Science">
        <title>Genome sequence of the plant pathogen and biotechnology agent Agrobacterium tumefaciens C58.</title>
        <authorList>
            <person name="Goodner B."/>
            <person name="Hinkle G."/>
            <person name="Gattung S."/>
            <person name="Miller N."/>
            <person name="Blanchard M."/>
            <person name="Qurollo B."/>
            <person name="Goldman B.S."/>
            <person name="Cao Y."/>
            <person name="Askenazi M."/>
            <person name="Halling C."/>
            <person name="Mullin L."/>
            <person name="Houmiel K."/>
            <person name="Gordon J."/>
            <person name="Vaudin M."/>
            <person name="Iartchouk O."/>
            <person name="Epp A."/>
            <person name="Liu F."/>
            <person name="Wollam C."/>
            <person name="Allinger M."/>
            <person name="Doughty D."/>
            <person name="Scott C."/>
            <person name="Lappas C."/>
            <person name="Markelz B."/>
            <person name="Flanagan C."/>
            <person name="Crowell C."/>
            <person name="Gurson J."/>
            <person name="Lomo C."/>
            <person name="Sear C."/>
            <person name="Strub G."/>
            <person name="Cielo C."/>
            <person name="Slater S."/>
        </authorList>
    </citation>
    <scope>NUCLEOTIDE SEQUENCE [LARGE SCALE GENOMIC DNA]</scope>
    <source>
        <strain>C58 / ATCC 33970</strain>
    </source>
</reference>
<protein>
    <recommendedName>
        <fullName evidence="1">Phosphate import ATP-binding protein PstB</fullName>
        <ecNumber evidence="1">7.3.2.1</ecNumber>
    </recommendedName>
    <alternativeName>
        <fullName evidence="1">ABC phosphate transporter</fullName>
    </alternativeName>
    <alternativeName>
        <fullName evidence="1">Phosphate-transporting ATPase</fullName>
    </alternativeName>
</protein>
<accession>Q8UI76</accession>
<gene>
    <name evidence="1" type="primary">pstB</name>
    <name type="ordered locus">Atu0423</name>
    <name type="ORF">AGR_C_743</name>
</gene>
<dbReference type="EC" id="7.3.2.1" evidence="1"/>
<dbReference type="EMBL" id="AE007869">
    <property type="protein sequence ID" value="AAK86237.1"/>
    <property type="molecule type" value="Genomic_DNA"/>
</dbReference>
<dbReference type="PIR" id="AE2628">
    <property type="entry name" value="AE2628"/>
</dbReference>
<dbReference type="PIR" id="D97410">
    <property type="entry name" value="D97410"/>
</dbReference>
<dbReference type="RefSeq" id="NP_353452.1">
    <property type="nucleotide sequence ID" value="NC_003062.2"/>
</dbReference>
<dbReference type="RefSeq" id="WP_003514913.1">
    <property type="nucleotide sequence ID" value="NC_003062.2"/>
</dbReference>
<dbReference type="SMR" id="Q8UI76"/>
<dbReference type="STRING" id="176299.Atu0423"/>
<dbReference type="EnsemblBacteria" id="AAK86237">
    <property type="protein sequence ID" value="AAK86237"/>
    <property type="gene ID" value="Atu0423"/>
</dbReference>
<dbReference type="GeneID" id="92769615"/>
<dbReference type="KEGG" id="atu:Atu0423"/>
<dbReference type="PATRIC" id="fig|176299.10.peg.414"/>
<dbReference type="eggNOG" id="COG1117">
    <property type="taxonomic scope" value="Bacteria"/>
</dbReference>
<dbReference type="HOGENOM" id="CLU_000604_1_22_5"/>
<dbReference type="OrthoDB" id="9802264at2"/>
<dbReference type="PhylomeDB" id="Q8UI76"/>
<dbReference type="BioCyc" id="AGRO:ATU0423-MONOMER"/>
<dbReference type="Proteomes" id="UP000000813">
    <property type="component" value="Chromosome circular"/>
</dbReference>
<dbReference type="GO" id="GO:0005886">
    <property type="term" value="C:plasma membrane"/>
    <property type="evidence" value="ECO:0007669"/>
    <property type="project" value="UniProtKB-SubCell"/>
</dbReference>
<dbReference type="GO" id="GO:0005524">
    <property type="term" value="F:ATP binding"/>
    <property type="evidence" value="ECO:0007669"/>
    <property type="project" value="UniProtKB-KW"/>
</dbReference>
<dbReference type="GO" id="GO:0016887">
    <property type="term" value="F:ATP hydrolysis activity"/>
    <property type="evidence" value="ECO:0007669"/>
    <property type="project" value="InterPro"/>
</dbReference>
<dbReference type="GO" id="GO:0015415">
    <property type="term" value="F:ATPase-coupled phosphate ion transmembrane transporter activity"/>
    <property type="evidence" value="ECO:0007669"/>
    <property type="project" value="UniProtKB-EC"/>
</dbReference>
<dbReference type="GO" id="GO:0035435">
    <property type="term" value="P:phosphate ion transmembrane transport"/>
    <property type="evidence" value="ECO:0007669"/>
    <property type="project" value="InterPro"/>
</dbReference>
<dbReference type="CDD" id="cd03260">
    <property type="entry name" value="ABC_PstB_phosphate_transporter"/>
    <property type="match status" value="1"/>
</dbReference>
<dbReference type="Gene3D" id="3.40.50.300">
    <property type="entry name" value="P-loop containing nucleotide triphosphate hydrolases"/>
    <property type="match status" value="1"/>
</dbReference>
<dbReference type="InterPro" id="IPR003593">
    <property type="entry name" value="AAA+_ATPase"/>
</dbReference>
<dbReference type="InterPro" id="IPR003439">
    <property type="entry name" value="ABC_transporter-like_ATP-bd"/>
</dbReference>
<dbReference type="InterPro" id="IPR017871">
    <property type="entry name" value="ABC_transporter-like_CS"/>
</dbReference>
<dbReference type="InterPro" id="IPR027417">
    <property type="entry name" value="P-loop_NTPase"/>
</dbReference>
<dbReference type="InterPro" id="IPR005670">
    <property type="entry name" value="PstB-like"/>
</dbReference>
<dbReference type="NCBIfam" id="TIGR00972">
    <property type="entry name" value="3a0107s01c2"/>
    <property type="match status" value="1"/>
</dbReference>
<dbReference type="PANTHER" id="PTHR43423">
    <property type="entry name" value="ABC TRANSPORTER I FAMILY MEMBER 17"/>
    <property type="match status" value="1"/>
</dbReference>
<dbReference type="PANTHER" id="PTHR43423:SF1">
    <property type="entry name" value="ABC TRANSPORTER I FAMILY MEMBER 17"/>
    <property type="match status" value="1"/>
</dbReference>
<dbReference type="Pfam" id="PF00005">
    <property type="entry name" value="ABC_tran"/>
    <property type="match status" value="1"/>
</dbReference>
<dbReference type="SMART" id="SM00382">
    <property type="entry name" value="AAA"/>
    <property type="match status" value="1"/>
</dbReference>
<dbReference type="SUPFAM" id="SSF52540">
    <property type="entry name" value="P-loop containing nucleoside triphosphate hydrolases"/>
    <property type="match status" value="1"/>
</dbReference>
<dbReference type="PROSITE" id="PS00211">
    <property type="entry name" value="ABC_TRANSPORTER_1"/>
    <property type="match status" value="1"/>
</dbReference>
<dbReference type="PROSITE" id="PS50893">
    <property type="entry name" value="ABC_TRANSPORTER_2"/>
    <property type="match status" value="1"/>
</dbReference>
<dbReference type="PROSITE" id="PS51238">
    <property type="entry name" value="PSTB"/>
    <property type="match status" value="1"/>
</dbReference>
<feature type="chain" id="PRO_0000092765" description="Phosphate import ATP-binding protein PstB">
    <location>
        <begin position="1"/>
        <end position="271"/>
    </location>
</feature>
<feature type="domain" description="ABC transporter" evidence="1">
    <location>
        <begin position="24"/>
        <end position="266"/>
    </location>
</feature>
<feature type="binding site" evidence="1">
    <location>
        <begin position="56"/>
        <end position="63"/>
    </location>
    <ligand>
        <name>ATP</name>
        <dbReference type="ChEBI" id="CHEBI:30616"/>
    </ligand>
</feature>
<evidence type="ECO:0000255" key="1">
    <source>
        <dbReference type="HAMAP-Rule" id="MF_01702"/>
    </source>
</evidence>
<proteinExistence type="inferred from homology"/>
<comment type="function">
    <text evidence="1">Part of the ABC transporter complex PstSACB involved in phosphate import. Responsible for energy coupling to the transport system.</text>
</comment>
<comment type="catalytic activity">
    <reaction evidence="1">
        <text>phosphate(out) + ATP + H2O = ADP + 2 phosphate(in) + H(+)</text>
        <dbReference type="Rhea" id="RHEA:24440"/>
        <dbReference type="ChEBI" id="CHEBI:15377"/>
        <dbReference type="ChEBI" id="CHEBI:15378"/>
        <dbReference type="ChEBI" id="CHEBI:30616"/>
        <dbReference type="ChEBI" id="CHEBI:43474"/>
        <dbReference type="ChEBI" id="CHEBI:456216"/>
        <dbReference type="EC" id="7.3.2.1"/>
    </reaction>
</comment>
<comment type="subunit">
    <text evidence="1">The complex is composed of two ATP-binding proteins (PstB), two transmembrane proteins (PstC and PstA) and a solute-binding protein (PstS).</text>
</comment>
<comment type="subcellular location">
    <subcellularLocation>
        <location evidence="1">Cell inner membrane</location>
        <topology evidence="1">Peripheral membrane protein</topology>
    </subcellularLocation>
</comment>
<comment type="similarity">
    <text evidence="1">Belongs to the ABC transporter superfamily. Phosphate importer (TC 3.A.1.7) family.</text>
</comment>
<name>PSTB_AGRFC</name>
<keyword id="KW-0067">ATP-binding</keyword>
<keyword id="KW-0997">Cell inner membrane</keyword>
<keyword id="KW-1003">Cell membrane</keyword>
<keyword id="KW-0472">Membrane</keyword>
<keyword id="KW-0547">Nucleotide-binding</keyword>
<keyword id="KW-0592">Phosphate transport</keyword>
<keyword id="KW-1185">Reference proteome</keyword>
<keyword id="KW-1278">Translocase</keyword>
<keyword id="KW-0813">Transport</keyword>
<sequence length="271" mass="30428">MNMLSEAAVEKALDKKMNEVSYKMIGKDVSVYYGEKRALYDVNLNVRENTVTALIGPSGCGKSTFLRTLNRMNDTIDGCRVTGKITLDTDDIYDQQIDVVELRARVGMVFQKPNPFPKTIYENIAYGPRIHGLARNKADMDQIVEHSLQKAGLWNEVKDRLLESGTGLSGGQQQRLCIARAVAVSPEVILMDEPCSALDPIATAKVEELIHELRTNYTIVIVTHSMQQAARVSQRTAMFHLGHLVEENETDKMFTNPDDQRTQDYIMGRFG</sequence>
<organism>
    <name type="scientific">Agrobacterium fabrum (strain C58 / ATCC 33970)</name>
    <name type="common">Agrobacterium tumefaciens (strain C58)</name>
    <dbReference type="NCBI Taxonomy" id="176299"/>
    <lineage>
        <taxon>Bacteria</taxon>
        <taxon>Pseudomonadati</taxon>
        <taxon>Pseudomonadota</taxon>
        <taxon>Alphaproteobacteria</taxon>
        <taxon>Hyphomicrobiales</taxon>
        <taxon>Rhizobiaceae</taxon>
        <taxon>Rhizobium/Agrobacterium group</taxon>
        <taxon>Agrobacterium</taxon>
        <taxon>Agrobacterium tumefaciens complex</taxon>
    </lineage>
</organism>